<keyword id="KW-0150">Chloroplast</keyword>
<keyword id="KW-0934">Plastid</keyword>
<keyword id="KW-1185">Reference proteome</keyword>
<keyword id="KW-0687">Ribonucleoprotein</keyword>
<keyword id="KW-0689">Ribosomal protein</keyword>
<sequence>MAKGKDIRVIVILECTGCDKKSVNKESTGISRYITKKNRQNTPSRLELRKFCPRCCKHTIHAEIKK</sequence>
<organism>
    <name type="scientific">Glycine max</name>
    <name type="common">Soybean</name>
    <name type="synonym">Glycine hispida</name>
    <dbReference type="NCBI Taxonomy" id="3847"/>
    <lineage>
        <taxon>Eukaryota</taxon>
        <taxon>Viridiplantae</taxon>
        <taxon>Streptophyta</taxon>
        <taxon>Embryophyta</taxon>
        <taxon>Tracheophyta</taxon>
        <taxon>Spermatophyta</taxon>
        <taxon>Magnoliopsida</taxon>
        <taxon>eudicotyledons</taxon>
        <taxon>Gunneridae</taxon>
        <taxon>Pentapetalae</taxon>
        <taxon>rosids</taxon>
        <taxon>fabids</taxon>
        <taxon>Fabales</taxon>
        <taxon>Fabaceae</taxon>
        <taxon>Papilionoideae</taxon>
        <taxon>50 kb inversion clade</taxon>
        <taxon>NPAAA clade</taxon>
        <taxon>indigoferoid/millettioid clade</taxon>
        <taxon>Phaseoleae</taxon>
        <taxon>Glycine</taxon>
        <taxon>Glycine subgen. Soja</taxon>
    </lineage>
</organism>
<gene>
    <name evidence="1" type="primary">rpl33</name>
</gene>
<comment type="subcellular location">
    <subcellularLocation>
        <location>Plastid</location>
        <location>Chloroplast</location>
    </subcellularLocation>
</comment>
<comment type="similarity">
    <text evidence="1">Belongs to the bacterial ribosomal protein bL33 family.</text>
</comment>
<dbReference type="EMBL" id="DQ317523">
    <property type="protein sequence ID" value="ABC25145.1"/>
    <property type="molecule type" value="Genomic_DNA"/>
</dbReference>
<dbReference type="RefSeq" id="YP_538785.1">
    <property type="nucleotide sequence ID" value="NC_007942.1"/>
</dbReference>
<dbReference type="FunCoup" id="Q2PMR3">
    <property type="interactions" value="57"/>
</dbReference>
<dbReference type="STRING" id="3847.Q2PMR3"/>
<dbReference type="PaxDb" id="3847-GLYMA15G38120.1"/>
<dbReference type="EnsemblPlants" id="KRH27384">
    <property type="protein sequence ID" value="KRH27384"/>
    <property type="gene ID" value="GLYMA_12G232300"/>
</dbReference>
<dbReference type="GeneID" id="3989319"/>
<dbReference type="Gramene" id="KRH27384">
    <property type="protein sequence ID" value="KRH27384"/>
    <property type="gene ID" value="GLYMA_12G232300"/>
</dbReference>
<dbReference type="KEGG" id="gmx:3989319"/>
<dbReference type="eggNOG" id="ENOG502S7HT">
    <property type="taxonomic scope" value="Eukaryota"/>
</dbReference>
<dbReference type="InParanoid" id="Q2PMR3"/>
<dbReference type="OMA" id="ECTEHKA"/>
<dbReference type="OrthoDB" id="361870at2759"/>
<dbReference type="Proteomes" id="UP000008827">
    <property type="component" value="Chloroplast"/>
</dbReference>
<dbReference type="GO" id="GO:0009507">
    <property type="term" value="C:chloroplast"/>
    <property type="evidence" value="ECO:0007669"/>
    <property type="project" value="UniProtKB-SubCell"/>
</dbReference>
<dbReference type="GO" id="GO:1990904">
    <property type="term" value="C:ribonucleoprotein complex"/>
    <property type="evidence" value="ECO:0007669"/>
    <property type="project" value="UniProtKB-KW"/>
</dbReference>
<dbReference type="GO" id="GO:0005840">
    <property type="term" value="C:ribosome"/>
    <property type="evidence" value="ECO:0007669"/>
    <property type="project" value="UniProtKB-KW"/>
</dbReference>
<dbReference type="GO" id="GO:0003735">
    <property type="term" value="F:structural constituent of ribosome"/>
    <property type="evidence" value="ECO:0007669"/>
    <property type="project" value="InterPro"/>
</dbReference>
<dbReference type="GO" id="GO:0006412">
    <property type="term" value="P:translation"/>
    <property type="evidence" value="ECO:0007669"/>
    <property type="project" value="UniProtKB-UniRule"/>
</dbReference>
<dbReference type="Gene3D" id="2.20.28.120">
    <property type="entry name" value="Ribosomal protein L33"/>
    <property type="match status" value="1"/>
</dbReference>
<dbReference type="HAMAP" id="MF_00294">
    <property type="entry name" value="Ribosomal_bL33"/>
    <property type="match status" value="1"/>
</dbReference>
<dbReference type="InterPro" id="IPR001705">
    <property type="entry name" value="Ribosomal_bL33"/>
</dbReference>
<dbReference type="InterPro" id="IPR018264">
    <property type="entry name" value="Ribosomal_bL33_CS"/>
</dbReference>
<dbReference type="InterPro" id="IPR038584">
    <property type="entry name" value="Ribosomal_bL33_sf"/>
</dbReference>
<dbReference type="InterPro" id="IPR011332">
    <property type="entry name" value="Ribosomal_zn-bd"/>
</dbReference>
<dbReference type="NCBIfam" id="NF001764">
    <property type="entry name" value="PRK00504.1"/>
    <property type="match status" value="1"/>
</dbReference>
<dbReference type="NCBIfam" id="NF001860">
    <property type="entry name" value="PRK00595.1"/>
    <property type="match status" value="1"/>
</dbReference>
<dbReference type="NCBIfam" id="TIGR01023">
    <property type="entry name" value="rpmG_bact"/>
    <property type="match status" value="1"/>
</dbReference>
<dbReference type="PANTHER" id="PTHR43168">
    <property type="entry name" value="50S RIBOSOMAL PROTEIN L33, CHLOROPLASTIC"/>
    <property type="match status" value="1"/>
</dbReference>
<dbReference type="PANTHER" id="PTHR43168:SF2">
    <property type="entry name" value="LARGE RIBOSOMAL SUBUNIT PROTEIN BL33C"/>
    <property type="match status" value="1"/>
</dbReference>
<dbReference type="Pfam" id="PF00471">
    <property type="entry name" value="Ribosomal_L33"/>
    <property type="match status" value="1"/>
</dbReference>
<dbReference type="SUPFAM" id="SSF57829">
    <property type="entry name" value="Zn-binding ribosomal proteins"/>
    <property type="match status" value="1"/>
</dbReference>
<dbReference type="PROSITE" id="PS00582">
    <property type="entry name" value="RIBOSOMAL_L33"/>
    <property type="match status" value="1"/>
</dbReference>
<geneLocation type="chloroplast"/>
<accession>Q2PMR3</accession>
<name>RK33_SOYBN</name>
<reference key="1">
    <citation type="journal article" date="2005" name="Plant Mol. Biol.">
        <title>Complete chloroplast genome sequence of Glycine max and comparative analyses with other legume genomes.</title>
        <authorList>
            <person name="Saski C."/>
            <person name="Lee S.-B."/>
            <person name="Daniell H."/>
            <person name="Wood T.C."/>
            <person name="Tomkins J."/>
            <person name="Kim H.-G."/>
            <person name="Jansen R.K."/>
        </authorList>
    </citation>
    <scope>NUCLEOTIDE SEQUENCE [LARGE SCALE GENOMIC DNA]</scope>
    <source>
        <strain>cv. PI 437654</strain>
    </source>
</reference>
<proteinExistence type="inferred from homology"/>
<protein>
    <recommendedName>
        <fullName evidence="1">Large ribosomal subunit protein bL33c</fullName>
    </recommendedName>
    <alternativeName>
        <fullName evidence="2">50S ribosomal protein L33, chloroplastic</fullName>
    </alternativeName>
</protein>
<evidence type="ECO:0000255" key="1">
    <source>
        <dbReference type="HAMAP-Rule" id="MF_00294"/>
    </source>
</evidence>
<evidence type="ECO:0000305" key="2"/>
<feature type="chain" id="PRO_0000276502" description="Large ribosomal subunit protein bL33c">
    <location>
        <begin position="1"/>
        <end position="66"/>
    </location>
</feature>